<reference key="1">
    <citation type="journal article" date="2011" name="J. Bacteriol.">
        <title>Comparative genomics of 28 Salmonella enterica isolates: evidence for CRISPR-mediated adaptive sublineage evolution.</title>
        <authorList>
            <person name="Fricke W.F."/>
            <person name="Mammel M.K."/>
            <person name="McDermott P.F."/>
            <person name="Tartera C."/>
            <person name="White D.G."/>
            <person name="Leclerc J.E."/>
            <person name="Ravel J."/>
            <person name="Cebula T.A."/>
        </authorList>
    </citation>
    <scope>NUCLEOTIDE SEQUENCE [LARGE SCALE GENOMIC DNA]</scope>
    <source>
        <strain>SL476</strain>
    </source>
</reference>
<accession>B4TEN4</accession>
<proteinExistence type="inferred from homology"/>
<name>CBPM_SALHS</name>
<comment type="function">
    <text evidence="1">Interacts with CbpA and inhibits both the DnaJ-like co-chaperone activity and the DNA binding activity of CbpA. Together with CbpA, modulates the activity of the DnaK chaperone system. Does not inhibit the co-chaperone activity of DnaJ.</text>
</comment>
<comment type="similarity">
    <text evidence="1">Belongs to the CbpM family.</text>
</comment>
<sequence>MANITVTFTITEFCLHTGVTEEELNEIVGLGVIEPYEDDNADWQFDDRAASVVQRALRLREELALDWPGIAVALTLLEENSRLREENRLLLQRLSRFISHP</sequence>
<gene>
    <name evidence="1" type="primary">cbpM</name>
    <name type="ordered locus">SeHA_C1221</name>
</gene>
<protein>
    <recommendedName>
        <fullName evidence="1">Chaperone modulatory protein CbpM</fullName>
    </recommendedName>
</protein>
<dbReference type="EMBL" id="CP001120">
    <property type="protein sequence ID" value="ACF66472.1"/>
    <property type="molecule type" value="Genomic_DNA"/>
</dbReference>
<dbReference type="RefSeq" id="WP_001284251.1">
    <property type="nucleotide sequence ID" value="NC_011083.1"/>
</dbReference>
<dbReference type="SMR" id="B4TEN4"/>
<dbReference type="KEGG" id="seh:SeHA_C1221"/>
<dbReference type="HOGENOM" id="CLU_144710_3_1_6"/>
<dbReference type="Proteomes" id="UP000001866">
    <property type="component" value="Chromosome"/>
</dbReference>
<dbReference type="Gene3D" id="1.10.1660.10">
    <property type="match status" value="1"/>
</dbReference>
<dbReference type="HAMAP" id="MF_01155">
    <property type="entry name" value="CbpM"/>
    <property type="match status" value="1"/>
</dbReference>
<dbReference type="InterPro" id="IPR022835">
    <property type="entry name" value="CbpM"/>
</dbReference>
<dbReference type="NCBIfam" id="NF007617">
    <property type="entry name" value="PRK10265.1"/>
    <property type="match status" value="1"/>
</dbReference>
<dbReference type="Pfam" id="PF13591">
    <property type="entry name" value="MerR_2"/>
    <property type="match status" value="1"/>
</dbReference>
<feature type="chain" id="PRO_1000137779" description="Chaperone modulatory protein CbpM">
    <location>
        <begin position="1"/>
        <end position="101"/>
    </location>
</feature>
<evidence type="ECO:0000255" key="1">
    <source>
        <dbReference type="HAMAP-Rule" id="MF_01155"/>
    </source>
</evidence>
<organism>
    <name type="scientific">Salmonella heidelberg (strain SL476)</name>
    <dbReference type="NCBI Taxonomy" id="454169"/>
    <lineage>
        <taxon>Bacteria</taxon>
        <taxon>Pseudomonadati</taxon>
        <taxon>Pseudomonadota</taxon>
        <taxon>Gammaproteobacteria</taxon>
        <taxon>Enterobacterales</taxon>
        <taxon>Enterobacteriaceae</taxon>
        <taxon>Salmonella</taxon>
    </lineage>
</organism>